<keyword id="KW-0963">Cytoplasm</keyword>
<keyword id="KW-0648">Protein biosynthesis</keyword>
<dbReference type="EMBL" id="AE017262">
    <property type="protein sequence ID" value="AAT04106.1"/>
    <property type="molecule type" value="Genomic_DNA"/>
</dbReference>
<dbReference type="RefSeq" id="WP_003723450.1">
    <property type="nucleotide sequence ID" value="NC_002973.6"/>
</dbReference>
<dbReference type="SMR" id="Q720A8"/>
<dbReference type="KEGG" id="lmf:LMOf2365_1331"/>
<dbReference type="HOGENOM" id="CLU_073981_2_0_9"/>
<dbReference type="GO" id="GO:0005737">
    <property type="term" value="C:cytoplasm"/>
    <property type="evidence" value="ECO:0007669"/>
    <property type="project" value="UniProtKB-SubCell"/>
</dbReference>
<dbReference type="GO" id="GO:0043023">
    <property type="term" value="F:ribosomal large subunit binding"/>
    <property type="evidence" value="ECO:0007669"/>
    <property type="project" value="TreeGrafter"/>
</dbReference>
<dbReference type="GO" id="GO:0006415">
    <property type="term" value="P:translational termination"/>
    <property type="evidence" value="ECO:0007669"/>
    <property type="project" value="UniProtKB-UniRule"/>
</dbReference>
<dbReference type="CDD" id="cd00520">
    <property type="entry name" value="RRF"/>
    <property type="match status" value="1"/>
</dbReference>
<dbReference type="FunFam" id="1.10.132.20:FF:000001">
    <property type="entry name" value="Ribosome-recycling factor"/>
    <property type="match status" value="1"/>
</dbReference>
<dbReference type="FunFam" id="3.30.1360.40:FF:000001">
    <property type="entry name" value="Ribosome-recycling factor"/>
    <property type="match status" value="1"/>
</dbReference>
<dbReference type="Gene3D" id="3.30.1360.40">
    <property type="match status" value="1"/>
</dbReference>
<dbReference type="Gene3D" id="1.10.132.20">
    <property type="entry name" value="Ribosome-recycling factor"/>
    <property type="match status" value="1"/>
</dbReference>
<dbReference type="HAMAP" id="MF_00040">
    <property type="entry name" value="RRF"/>
    <property type="match status" value="1"/>
</dbReference>
<dbReference type="InterPro" id="IPR002661">
    <property type="entry name" value="Ribosome_recyc_fac"/>
</dbReference>
<dbReference type="InterPro" id="IPR023584">
    <property type="entry name" value="Ribosome_recyc_fac_dom"/>
</dbReference>
<dbReference type="InterPro" id="IPR036191">
    <property type="entry name" value="RRF_sf"/>
</dbReference>
<dbReference type="NCBIfam" id="TIGR00496">
    <property type="entry name" value="frr"/>
    <property type="match status" value="1"/>
</dbReference>
<dbReference type="PANTHER" id="PTHR20982:SF3">
    <property type="entry name" value="MITOCHONDRIAL RIBOSOME RECYCLING FACTOR PSEUDO 1"/>
    <property type="match status" value="1"/>
</dbReference>
<dbReference type="PANTHER" id="PTHR20982">
    <property type="entry name" value="RIBOSOME RECYCLING FACTOR"/>
    <property type="match status" value="1"/>
</dbReference>
<dbReference type="Pfam" id="PF01765">
    <property type="entry name" value="RRF"/>
    <property type="match status" value="1"/>
</dbReference>
<dbReference type="SUPFAM" id="SSF55194">
    <property type="entry name" value="Ribosome recycling factor, RRF"/>
    <property type="match status" value="1"/>
</dbReference>
<organism>
    <name type="scientific">Listeria monocytogenes serotype 4b (strain F2365)</name>
    <dbReference type="NCBI Taxonomy" id="265669"/>
    <lineage>
        <taxon>Bacteria</taxon>
        <taxon>Bacillati</taxon>
        <taxon>Bacillota</taxon>
        <taxon>Bacilli</taxon>
        <taxon>Bacillales</taxon>
        <taxon>Listeriaceae</taxon>
        <taxon>Listeria</taxon>
    </lineage>
</organism>
<name>RRF_LISMF</name>
<feature type="chain" id="PRO_0000167485" description="Ribosome-recycling factor">
    <location>
        <begin position="1"/>
        <end position="185"/>
    </location>
</feature>
<proteinExistence type="inferred from homology"/>
<comment type="function">
    <text evidence="1">Responsible for the release of ribosomes from messenger RNA at the termination of protein biosynthesis. May increase the efficiency of translation by recycling ribosomes from one round of translation to another.</text>
</comment>
<comment type="subcellular location">
    <subcellularLocation>
        <location evidence="1">Cytoplasm</location>
    </subcellularLocation>
</comment>
<comment type="similarity">
    <text evidence="1">Belongs to the RRF family.</text>
</comment>
<gene>
    <name evidence="1" type="primary">frr</name>
    <name type="ordered locus">LMOf2365_1331</name>
</gene>
<protein>
    <recommendedName>
        <fullName evidence="1">Ribosome-recycling factor</fullName>
        <shortName evidence="1">RRF</shortName>
    </recommendedName>
    <alternativeName>
        <fullName evidence="1">Ribosome-releasing factor</fullName>
    </alternativeName>
</protein>
<evidence type="ECO:0000255" key="1">
    <source>
        <dbReference type="HAMAP-Rule" id="MF_00040"/>
    </source>
</evidence>
<sequence>MSKEVLSKSKEKMEKAEQALTRQLGTIRAGRANASLLDRLSVDYYGAATPVNQMASISVPEARMLLITPYDKTILGEIEKAILKSDLGLTPNNDGSVLRLSIPQLTEERRKELVKEVKKEAEEAKVAVRNIRREANEELKKLEKNGDITEDDLRSYGEDVQKLTDESIKNIDSITKDKEAEILEV</sequence>
<reference key="1">
    <citation type="journal article" date="2004" name="Nucleic Acids Res.">
        <title>Whole genome comparisons of serotype 4b and 1/2a strains of the food-borne pathogen Listeria monocytogenes reveal new insights into the core genome components of this species.</title>
        <authorList>
            <person name="Nelson K.E."/>
            <person name="Fouts D.E."/>
            <person name="Mongodin E.F."/>
            <person name="Ravel J."/>
            <person name="DeBoy R.T."/>
            <person name="Kolonay J.F."/>
            <person name="Rasko D.A."/>
            <person name="Angiuoli S.V."/>
            <person name="Gill S.R."/>
            <person name="Paulsen I.T."/>
            <person name="Peterson J.D."/>
            <person name="White O."/>
            <person name="Nelson W.C."/>
            <person name="Nierman W.C."/>
            <person name="Beanan M.J."/>
            <person name="Brinkac L.M."/>
            <person name="Daugherty S.C."/>
            <person name="Dodson R.J."/>
            <person name="Durkin A.S."/>
            <person name="Madupu R."/>
            <person name="Haft D.H."/>
            <person name="Selengut J."/>
            <person name="Van Aken S.E."/>
            <person name="Khouri H.M."/>
            <person name="Fedorova N."/>
            <person name="Forberger H.A."/>
            <person name="Tran B."/>
            <person name="Kathariou S."/>
            <person name="Wonderling L.D."/>
            <person name="Uhlich G.A."/>
            <person name="Bayles D.O."/>
            <person name="Luchansky J.B."/>
            <person name="Fraser C.M."/>
        </authorList>
    </citation>
    <scope>NUCLEOTIDE SEQUENCE [LARGE SCALE GENOMIC DNA]</scope>
    <source>
        <strain>F2365</strain>
    </source>
</reference>
<accession>Q720A8</accession>